<keyword id="KW-0067">ATP-binding</keyword>
<keyword id="KW-0347">Helicase</keyword>
<keyword id="KW-0378">Hydrolase</keyword>
<keyword id="KW-0547">Nucleotide-binding</keyword>
<keyword id="KW-1185">Reference proteome</keyword>
<keyword id="KW-0694">RNA-binding</keyword>
<keyword id="KW-0804">Transcription</keyword>
<keyword id="KW-0805">Transcription regulation</keyword>
<keyword id="KW-0806">Transcription termination</keyword>
<dbReference type="EC" id="3.6.4.-" evidence="1"/>
<dbReference type="EMBL" id="BA000003">
    <property type="protein sequence ID" value="BAB13281.1"/>
    <property type="molecule type" value="Genomic_DNA"/>
</dbReference>
<dbReference type="RefSeq" id="NP_240395.1">
    <property type="nucleotide sequence ID" value="NC_002528.1"/>
</dbReference>
<dbReference type="RefSeq" id="WP_009874544.1">
    <property type="nucleotide sequence ID" value="NZ_AP036055.1"/>
</dbReference>
<dbReference type="SMR" id="P57652"/>
<dbReference type="STRING" id="563178.BUAP5A_588"/>
<dbReference type="EnsemblBacteria" id="BAB13281">
    <property type="protein sequence ID" value="BAB13281"/>
    <property type="gene ID" value="BAB13281"/>
</dbReference>
<dbReference type="KEGG" id="buc:BU596"/>
<dbReference type="PATRIC" id="fig|107806.10.peg.599"/>
<dbReference type="eggNOG" id="COG1158">
    <property type="taxonomic scope" value="Bacteria"/>
</dbReference>
<dbReference type="HOGENOM" id="CLU_016377_4_3_6"/>
<dbReference type="Proteomes" id="UP000001806">
    <property type="component" value="Chromosome"/>
</dbReference>
<dbReference type="GO" id="GO:0005829">
    <property type="term" value="C:cytosol"/>
    <property type="evidence" value="ECO:0007669"/>
    <property type="project" value="UniProtKB-ARBA"/>
</dbReference>
<dbReference type="GO" id="GO:0005524">
    <property type="term" value="F:ATP binding"/>
    <property type="evidence" value="ECO:0007669"/>
    <property type="project" value="UniProtKB-UniRule"/>
</dbReference>
<dbReference type="GO" id="GO:0016887">
    <property type="term" value="F:ATP hydrolysis activity"/>
    <property type="evidence" value="ECO:0007669"/>
    <property type="project" value="InterPro"/>
</dbReference>
<dbReference type="GO" id="GO:0008186">
    <property type="term" value="F:ATP-dependent activity, acting on RNA"/>
    <property type="evidence" value="ECO:0007669"/>
    <property type="project" value="InterPro"/>
</dbReference>
<dbReference type="GO" id="GO:0004386">
    <property type="term" value="F:helicase activity"/>
    <property type="evidence" value="ECO:0007669"/>
    <property type="project" value="UniProtKB-UniRule"/>
</dbReference>
<dbReference type="GO" id="GO:0003723">
    <property type="term" value="F:RNA binding"/>
    <property type="evidence" value="ECO:0007669"/>
    <property type="project" value="UniProtKB-UniRule"/>
</dbReference>
<dbReference type="GO" id="GO:0006353">
    <property type="term" value="P:DNA-templated transcription termination"/>
    <property type="evidence" value="ECO:0007669"/>
    <property type="project" value="UniProtKB-UniRule"/>
</dbReference>
<dbReference type="CDD" id="cd04459">
    <property type="entry name" value="Rho_CSD"/>
    <property type="match status" value="1"/>
</dbReference>
<dbReference type="CDD" id="cd01128">
    <property type="entry name" value="rho_factor_C"/>
    <property type="match status" value="1"/>
</dbReference>
<dbReference type="FunFam" id="1.10.720.10:FF:000001">
    <property type="entry name" value="Transcription termination factor Rho"/>
    <property type="match status" value="1"/>
</dbReference>
<dbReference type="FunFam" id="2.40.50.140:FF:000010">
    <property type="entry name" value="Transcription termination factor Rho"/>
    <property type="match status" value="1"/>
</dbReference>
<dbReference type="FunFam" id="3.40.50.300:FF:000072">
    <property type="entry name" value="Transcription termination factor Rho"/>
    <property type="match status" value="1"/>
</dbReference>
<dbReference type="Gene3D" id="1.10.720.10">
    <property type="match status" value="1"/>
</dbReference>
<dbReference type="Gene3D" id="2.40.50.140">
    <property type="entry name" value="Nucleic acid-binding proteins"/>
    <property type="match status" value="1"/>
</dbReference>
<dbReference type="Gene3D" id="3.40.50.300">
    <property type="entry name" value="P-loop containing nucleotide triphosphate hydrolases"/>
    <property type="match status" value="1"/>
</dbReference>
<dbReference type="HAMAP" id="MF_01884">
    <property type="entry name" value="Rho"/>
    <property type="match status" value="1"/>
</dbReference>
<dbReference type="InterPro" id="IPR003593">
    <property type="entry name" value="AAA+_ATPase"/>
</dbReference>
<dbReference type="InterPro" id="IPR000194">
    <property type="entry name" value="ATPase_F1/V1/A1_a/bsu_nucl-bd"/>
</dbReference>
<dbReference type="InterPro" id="IPR011129">
    <property type="entry name" value="CSD"/>
</dbReference>
<dbReference type="InterPro" id="IPR012340">
    <property type="entry name" value="NA-bd_OB-fold"/>
</dbReference>
<dbReference type="InterPro" id="IPR027417">
    <property type="entry name" value="P-loop_NTPase"/>
</dbReference>
<dbReference type="InterPro" id="IPR011112">
    <property type="entry name" value="Rho-like_N"/>
</dbReference>
<dbReference type="InterPro" id="IPR041703">
    <property type="entry name" value="Rho_factor_ATP-bd"/>
</dbReference>
<dbReference type="InterPro" id="IPR036269">
    <property type="entry name" value="Rho_N_sf"/>
</dbReference>
<dbReference type="InterPro" id="IPR011113">
    <property type="entry name" value="Rho_RNA-bd"/>
</dbReference>
<dbReference type="InterPro" id="IPR004665">
    <property type="entry name" value="Term_rho"/>
</dbReference>
<dbReference type="NCBIfam" id="NF006886">
    <property type="entry name" value="PRK09376.1"/>
    <property type="match status" value="1"/>
</dbReference>
<dbReference type="NCBIfam" id="TIGR00767">
    <property type="entry name" value="rho"/>
    <property type="match status" value="1"/>
</dbReference>
<dbReference type="PANTHER" id="PTHR46425">
    <property type="entry name" value="TRANSCRIPTION TERMINATION FACTOR RHO"/>
    <property type="match status" value="1"/>
</dbReference>
<dbReference type="PANTHER" id="PTHR46425:SF1">
    <property type="entry name" value="TRANSCRIPTION TERMINATION FACTOR RHO"/>
    <property type="match status" value="1"/>
</dbReference>
<dbReference type="Pfam" id="PF00006">
    <property type="entry name" value="ATP-synt_ab"/>
    <property type="match status" value="1"/>
</dbReference>
<dbReference type="Pfam" id="PF07498">
    <property type="entry name" value="Rho_N"/>
    <property type="match status" value="1"/>
</dbReference>
<dbReference type="Pfam" id="PF07497">
    <property type="entry name" value="Rho_RNA_bind"/>
    <property type="match status" value="1"/>
</dbReference>
<dbReference type="SMART" id="SM00382">
    <property type="entry name" value="AAA"/>
    <property type="match status" value="1"/>
</dbReference>
<dbReference type="SMART" id="SM00357">
    <property type="entry name" value="CSP"/>
    <property type="match status" value="1"/>
</dbReference>
<dbReference type="SMART" id="SM00959">
    <property type="entry name" value="Rho_N"/>
    <property type="match status" value="1"/>
</dbReference>
<dbReference type="SUPFAM" id="SSF50249">
    <property type="entry name" value="Nucleic acid-binding proteins"/>
    <property type="match status" value="1"/>
</dbReference>
<dbReference type="SUPFAM" id="SSF52540">
    <property type="entry name" value="P-loop containing nucleoside triphosphate hydrolases"/>
    <property type="match status" value="1"/>
</dbReference>
<dbReference type="SUPFAM" id="SSF68912">
    <property type="entry name" value="Rho N-terminal domain-like"/>
    <property type="match status" value="1"/>
</dbReference>
<dbReference type="PROSITE" id="PS51856">
    <property type="entry name" value="RHO_RNA_BD"/>
    <property type="match status" value="1"/>
</dbReference>
<feature type="chain" id="PRO_0000188957" description="Transcription termination factor Rho">
    <location>
        <begin position="1"/>
        <end position="419"/>
    </location>
</feature>
<feature type="domain" description="Rho RNA-BD" evidence="2">
    <location>
        <begin position="48"/>
        <end position="123"/>
    </location>
</feature>
<feature type="region of interest" description="RNA-binding 1" evidence="1">
    <location>
        <begin position="61"/>
        <end position="66"/>
    </location>
</feature>
<feature type="region of interest" description="RNA-binding 1" evidence="1">
    <location>
        <begin position="78"/>
        <end position="80"/>
    </location>
</feature>
<feature type="region of interest" description="RNA-binding 1" evidence="1">
    <location>
        <begin position="108"/>
        <end position="110"/>
    </location>
</feature>
<feature type="region of interest" description="RNA-binding 2" evidence="1">
    <location>
        <begin position="284"/>
        <end position="288"/>
    </location>
</feature>
<feature type="binding site" evidence="1">
    <location>
        <begin position="169"/>
        <end position="174"/>
    </location>
    <ligand>
        <name>ATP</name>
        <dbReference type="ChEBI" id="CHEBI:30616"/>
    </ligand>
</feature>
<feature type="binding site" evidence="1">
    <location>
        <begin position="181"/>
        <end position="186"/>
    </location>
    <ligand>
        <name>ATP</name>
        <dbReference type="ChEBI" id="CHEBI:30616"/>
    </ligand>
</feature>
<feature type="binding site" evidence="1">
    <location>
        <position position="212"/>
    </location>
    <ligand>
        <name>ATP</name>
        <dbReference type="ChEBI" id="CHEBI:30616"/>
    </ligand>
</feature>
<feature type="site" description="RNA-binding 2" evidence="1">
    <location>
        <position position="326"/>
    </location>
</feature>
<reference key="1">
    <citation type="journal article" date="2000" name="Nature">
        <title>Genome sequence of the endocellular bacterial symbiont of aphids Buchnera sp. APS.</title>
        <authorList>
            <person name="Shigenobu S."/>
            <person name="Watanabe H."/>
            <person name="Hattori M."/>
            <person name="Sakaki Y."/>
            <person name="Ishikawa H."/>
        </authorList>
    </citation>
    <scope>NUCLEOTIDE SEQUENCE [LARGE SCALE GENOMIC DNA]</scope>
    <source>
        <strain>APS</strain>
    </source>
</reference>
<evidence type="ECO:0000255" key="1">
    <source>
        <dbReference type="HAMAP-Rule" id="MF_01884"/>
    </source>
</evidence>
<evidence type="ECO:0000255" key="2">
    <source>
        <dbReference type="PROSITE-ProRule" id="PRU01203"/>
    </source>
</evidence>
<gene>
    <name evidence="1" type="primary">rho</name>
    <name type="ordered locus">BU596</name>
</gene>
<sequence length="419" mass="46888">MNLTALKNMPVSELITLGEKMGLENLARMRKQDIIFAILKQHAKSGEDIFGDGVLEILQDGFGFLRSADSSYLAGPDDIYVSPSQIRRFNLRTGDTIAGKIRPPKEGERYFALLKVNEVNYDKPENARSKILFENLTPLHANSRLRMERGNGSTEDLTARVLDLASPIGRGQRGLIVAPPKAGKTILLQNIAQSIAYNHPDCVLMVLLIDERPEEVTEMQRLVKGEVVASTFDEPASRHVQVAEMVIEKAKRLVEHKKDVIILLDSITRLARAYNTVVPASGKVLTGGVDANALHRPKRFFGAARNVEEGGSLTIIATALVDTGSKMDEVIYEEFKGTGNMELPLSRKIAEKRVFPAIDYNRSGTRKEELLTLPDELQKMWILRKIIHPMSEIDAMEFLLNKLAMTKTNDEFFDMMKRS</sequence>
<proteinExistence type="inferred from homology"/>
<comment type="function">
    <text evidence="1">Facilitates transcription termination by a mechanism that involves Rho binding to the nascent RNA, activation of Rho's RNA-dependent ATPase activity, and release of the mRNA from the DNA template.</text>
</comment>
<comment type="subunit">
    <text evidence="1">Homohexamer. The homohexamer assembles into an open ring structure.</text>
</comment>
<comment type="similarity">
    <text evidence="1">Belongs to the Rho family.</text>
</comment>
<protein>
    <recommendedName>
        <fullName evidence="1">Transcription termination factor Rho</fullName>
        <ecNumber evidence="1">3.6.4.-</ecNumber>
    </recommendedName>
    <alternativeName>
        <fullName evidence="1">ATP-dependent helicase Rho</fullName>
    </alternativeName>
</protein>
<name>RHO_BUCAI</name>
<organism>
    <name type="scientific">Buchnera aphidicola subsp. Acyrthosiphon pisum (strain APS)</name>
    <name type="common">Acyrthosiphon pisum symbiotic bacterium</name>
    <dbReference type="NCBI Taxonomy" id="107806"/>
    <lineage>
        <taxon>Bacteria</taxon>
        <taxon>Pseudomonadati</taxon>
        <taxon>Pseudomonadota</taxon>
        <taxon>Gammaproteobacteria</taxon>
        <taxon>Enterobacterales</taxon>
        <taxon>Erwiniaceae</taxon>
        <taxon>Buchnera</taxon>
    </lineage>
</organism>
<accession>P57652</accession>